<keyword id="KW-0143">Chaperone</keyword>
<keyword id="KW-0963">Cytoplasm</keyword>
<keyword id="KW-0690">Ribosome biogenesis</keyword>
<keyword id="KW-0698">rRNA processing</keyword>
<accession>Q14JS8</accession>
<protein>
    <recommendedName>
        <fullName evidence="1">Ribosome maturation factor RimM</fullName>
    </recommendedName>
</protein>
<name>RIMM_FRAT1</name>
<evidence type="ECO:0000255" key="1">
    <source>
        <dbReference type="HAMAP-Rule" id="MF_00014"/>
    </source>
</evidence>
<dbReference type="EMBL" id="AM286280">
    <property type="protein sequence ID" value="CAL08167.1"/>
    <property type="molecule type" value="Genomic_DNA"/>
</dbReference>
<dbReference type="RefSeq" id="WP_003019921.1">
    <property type="nucleotide sequence ID" value="NC_008245.1"/>
</dbReference>
<dbReference type="SMR" id="Q14JS8"/>
<dbReference type="KEGG" id="ftf:FTF0151"/>
<dbReference type="HOGENOM" id="CLU_077636_1_0_6"/>
<dbReference type="GO" id="GO:0005737">
    <property type="term" value="C:cytoplasm"/>
    <property type="evidence" value="ECO:0007669"/>
    <property type="project" value="UniProtKB-SubCell"/>
</dbReference>
<dbReference type="GO" id="GO:0005840">
    <property type="term" value="C:ribosome"/>
    <property type="evidence" value="ECO:0007669"/>
    <property type="project" value="InterPro"/>
</dbReference>
<dbReference type="GO" id="GO:0043022">
    <property type="term" value="F:ribosome binding"/>
    <property type="evidence" value="ECO:0007669"/>
    <property type="project" value="InterPro"/>
</dbReference>
<dbReference type="GO" id="GO:0042274">
    <property type="term" value="P:ribosomal small subunit biogenesis"/>
    <property type="evidence" value="ECO:0007669"/>
    <property type="project" value="UniProtKB-UniRule"/>
</dbReference>
<dbReference type="GO" id="GO:0006364">
    <property type="term" value="P:rRNA processing"/>
    <property type="evidence" value="ECO:0007669"/>
    <property type="project" value="UniProtKB-UniRule"/>
</dbReference>
<dbReference type="Gene3D" id="2.30.30.240">
    <property type="entry name" value="PRC-barrel domain"/>
    <property type="match status" value="1"/>
</dbReference>
<dbReference type="Gene3D" id="2.40.30.60">
    <property type="entry name" value="RimM"/>
    <property type="match status" value="1"/>
</dbReference>
<dbReference type="HAMAP" id="MF_00014">
    <property type="entry name" value="Ribosome_mat_RimM"/>
    <property type="match status" value="1"/>
</dbReference>
<dbReference type="InterPro" id="IPR011033">
    <property type="entry name" value="PRC_barrel-like_sf"/>
</dbReference>
<dbReference type="InterPro" id="IPR056792">
    <property type="entry name" value="PRC_RimM"/>
</dbReference>
<dbReference type="InterPro" id="IPR011961">
    <property type="entry name" value="RimM"/>
</dbReference>
<dbReference type="InterPro" id="IPR002676">
    <property type="entry name" value="RimM_N"/>
</dbReference>
<dbReference type="InterPro" id="IPR036976">
    <property type="entry name" value="RimM_N_sf"/>
</dbReference>
<dbReference type="InterPro" id="IPR009000">
    <property type="entry name" value="Transl_B-barrel_sf"/>
</dbReference>
<dbReference type="NCBIfam" id="TIGR02273">
    <property type="entry name" value="16S_RimM"/>
    <property type="match status" value="1"/>
</dbReference>
<dbReference type="NCBIfam" id="NF011185">
    <property type="entry name" value="PRK14591.1"/>
    <property type="match status" value="1"/>
</dbReference>
<dbReference type="PANTHER" id="PTHR33692">
    <property type="entry name" value="RIBOSOME MATURATION FACTOR RIMM"/>
    <property type="match status" value="1"/>
</dbReference>
<dbReference type="PANTHER" id="PTHR33692:SF1">
    <property type="entry name" value="RIBOSOME MATURATION FACTOR RIMM"/>
    <property type="match status" value="1"/>
</dbReference>
<dbReference type="Pfam" id="PF24986">
    <property type="entry name" value="PRC_RimM"/>
    <property type="match status" value="1"/>
</dbReference>
<dbReference type="Pfam" id="PF01782">
    <property type="entry name" value="RimM"/>
    <property type="match status" value="1"/>
</dbReference>
<dbReference type="SUPFAM" id="SSF50346">
    <property type="entry name" value="PRC-barrel domain"/>
    <property type="match status" value="1"/>
</dbReference>
<dbReference type="SUPFAM" id="SSF50447">
    <property type="entry name" value="Translation proteins"/>
    <property type="match status" value="1"/>
</dbReference>
<sequence length="169" mass="19181">MSQDFVEIAKIGATYKLNGELNLYPLANSIETLLSYGDWYIQLPATNVWQQLKGESVLKRADKVYIKLANINNADTAKKYVNALIGVPKRALPQLAEDEVYFKDLIGCSVKNINNDSFGVVVDIIETDANEVLVCKEDNSEYLIPYVKQYIVSEDLNSKKIVVDWEYDY</sequence>
<gene>
    <name evidence="1" type="primary">rimM</name>
    <name type="ordered locus">FTF0151</name>
</gene>
<proteinExistence type="inferred from homology"/>
<reference key="1">
    <citation type="journal article" date="2007" name="PLoS ONE">
        <title>Genome sequencing shows that European isolates of Francisella tularensis subspecies tularensis are almost identical to US laboratory strain Schu S4.</title>
        <authorList>
            <person name="Chaudhuri R.R."/>
            <person name="Ren C.-P."/>
            <person name="Desmond L."/>
            <person name="Vincent G.A."/>
            <person name="Silman N.J."/>
            <person name="Brehm J.K."/>
            <person name="Elmore M.J."/>
            <person name="Hudson M.J."/>
            <person name="Forsman M."/>
            <person name="Isherwood K.E."/>
            <person name="Gurycova D."/>
            <person name="Minton N.P."/>
            <person name="Titball R.W."/>
            <person name="Pallen M.J."/>
            <person name="Vipond R."/>
        </authorList>
    </citation>
    <scope>NUCLEOTIDE SEQUENCE [LARGE SCALE GENOMIC DNA]</scope>
    <source>
        <strain>FSC 198</strain>
    </source>
</reference>
<feature type="chain" id="PRO_1000001172" description="Ribosome maturation factor RimM">
    <location>
        <begin position="1"/>
        <end position="169"/>
    </location>
</feature>
<feature type="domain" description="PRC barrel" evidence="1">
    <location>
        <begin position="97"/>
        <end position="169"/>
    </location>
</feature>
<organism>
    <name type="scientific">Francisella tularensis subsp. tularensis (strain FSC 198)</name>
    <dbReference type="NCBI Taxonomy" id="393115"/>
    <lineage>
        <taxon>Bacteria</taxon>
        <taxon>Pseudomonadati</taxon>
        <taxon>Pseudomonadota</taxon>
        <taxon>Gammaproteobacteria</taxon>
        <taxon>Thiotrichales</taxon>
        <taxon>Francisellaceae</taxon>
        <taxon>Francisella</taxon>
    </lineage>
</organism>
<comment type="function">
    <text evidence="1">An accessory protein needed during the final step in the assembly of 30S ribosomal subunit, possibly for assembly of the head region. Essential for efficient processing of 16S rRNA. May be needed both before and after RbfA during the maturation of 16S rRNA. It has affinity for free ribosomal 30S subunits but not for 70S ribosomes.</text>
</comment>
<comment type="subunit">
    <text evidence="1">Binds ribosomal protein uS19.</text>
</comment>
<comment type="subcellular location">
    <subcellularLocation>
        <location evidence="1">Cytoplasm</location>
    </subcellularLocation>
</comment>
<comment type="domain">
    <text evidence="1">The PRC barrel domain binds ribosomal protein uS19.</text>
</comment>
<comment type="similarity">
    <text evidence="1">Belongs to the RimM family.</text>
</comment>